<accession>Q0UZK0</accession>
<feature type="chain" id="PRO_0000356983" description="Kynureninase 2">
    <location>
        <begin position="1"/>
        <end position="489"/>
    </location>
</feature>
<feature type="region of interest" description="Disordered" evidence="2">
    <location>
        <begin position="1"/>
        <end position="25"/>
    </location>
</feature>
<feature type="compositionally biased region" description="Polar residues" evidence="2">
    <location>
        <begin position="1"/>
        <end position="12"/>
    </location>
</feature>
<feature type="binding site" evidence="1">
    <location>
        <position position="149"/>
    </location>
    <ligand>
        <name>pyridoxal 5'-phosphate</name>
        <dbReference type="ChEBI" id="CHEBI:597326"/>
    </ligand>
</feature>
<feature type="binding site" evidence="1">
    <location>
        <position position="150"/>
    </location>
    <ligand>
        <name>pyridoxal 5'-phosphate</name>
        <dbReference type="ChEBI" id="CHEBI:597326"/>
    </ligand>
</feature>
<feature type="binding site" evidence="1">
    <location>
        <begin position="177"/>
        <end position="180"/>
    </location>
    <ligand>
        <name>pyridoxal 5'-phosphate</name>
        <dbReference type="ChEBI" id="CHEBI:597326"/>
    </ligand>
</feature>
<feature type="binding site" evidence="1">
    <location>
        <position position="261"/>
    </location>
    <ligand>
        <name>pyridoxal 5'-phosphate</name>
        <dbReference type="ChEBI" id="CHEBI:597326"/>
    </ligand>
</feature>
<feature type="binding site" evidence="1">
    <location>
        <position position="264"/>
    </location>
    <ligand>
        <name>pyridoxal 5'-phosphate</name>
        <dbReference type="ChEBI" id="CHEBI:597326"/>
    </ligand>
</feature>
<feature type="binding site" evidence="1">
    <location>
        <position position="286"/>
    </location>
    <ligand>
        <name>pyridoxal 5'-phosphate</name>
        <dbReference type="ChEBI" id="CHEBI:597326"/>
    </ligand>
</feature>
<feature type="binding site" evidence="1">
    <location>
        <position position="317"/>
    </location>
    <ligand>
        <name>pyridoxal 5'-phosphate</name>
        <dbReference type="ChEBI" id="CHEBI:597326"/>
    </ligand>
</feature>
<feature type="binding site" evidence="1">
    <location>
        <position position="345"/>
    </location>
    <ligand>
        <name>pyridoxal 5'-phosphate</name>
        <dbReference type="ChEBI" id="CHEBI:597326"/>
    </ligand>
</feature>
<feature type="modified residue" description="N6-(pyridoxal phosphate)lysine" evidence="1">
    <location>
        <position position="287"/>
    </location>
</feature>
<sequence>MDASAAISQLRQGQKPEWPQNANTSDFAKTLDNSSEFPKTLRHEYVVPTKAQLKRKTLNDDAQTAAKASSSDDEGIYFCGNSLGLQPKAVGEYLNAYLKTWGSIAVGSHFTPMADSPLTPFQDMAAECARRMSDIVGASPSEIVAMNTLTINLHLMMAAFYKPTEKKHKIMCEWRPFPSDWYAIESQIEWHGLDPKKSMLLVKPDDGYLMTTESILKLIDQEADELALIMLPGIQYYSGQLLDIPTITTHARKHGITIGWDLAHAAGNVELKLHDWDVDFACWCTYKYMNAGAGAIAGAFVHSKHGDNGSNVGLKGWYGHDKSSRFLMDNKFVPTPGAQGFQCSNPSAVDLTCLAGSLSVFQKTSVADLRSRSLLLTAYAEHLLTQIASRNIKDGNFPFQIISPLDPRFRGAQLSVLLQEDVMEEVFAGLEENGVICDKRKPGIIRVAPVPMYNTFEDVYKFMHILEGALQPKAEQKTQAHGEAVEARL</sequence>
<comment type="function">
    <text evidence="1">Catalyzes the cleavage of L-kynurenine (L-Kyn) and L-3-hydroxykynurenine (L-3OHKyn) into anthranilic acid (AA) and 3-hydroxyanthranilic acid (3-OHAA), respectively.</text>
</comment>
<comment type="catalytic activity">
    <reaction evidence="1">
        <text>L-kynurenine + H2O = anthranilate + L-alanine + H(+)</text>
        <dbReference type="Rhea" id="RHEA:16813"/>
        <dbReference type="ChEBI" id="CHEBI:15377"/>
        <dbReference type="ChEBI" id="CHEBI:15378"/>
        <dbReference type="ChEBI" id="CHEBI:16567"/>
        <dbReference type="ChEBI" id="CHEBI:57959"/>
        <dbReference type="ChEBI" id="CHEBI:57972"/>
        <dbReference type="EC" id="3.7.1.3"/>
    </reaction>
</comment>
<comment type="catalytic activity">
    <reaction evidence="1">
        <text>3-hydroxy-L-kynurenine + H2O = 3-hydroxyanthranilate + L-alanine + H(+)</text>
        <dbReference type="Rhea" id="RHEA:25143"/>
        <dbReference type="ChEBI" id="CHEBI:15377"/>
        <dbReference type="ChEBI" id="CHEBI:15378"/>
        <dbReference type="ChEBI" id="CHEBI:36559"/>
        <dbReference type="ChEBI" id="CHEBI:57972"/>
        <dbReference type="ChEBI" id="CHEBI:58125"/>
        <dbReference type="EC" id="3.7.1.3"/>
    </reaction>
</comment>
<comment type="cofactor">
    <cofactor evidence="1">
        <name>pyridoxal 5'-phosphate</name>
        <dbReference type="ChEBI" id="CHEBI:597326"/>
    </cofactor>
</comment>
<comment type="pathway">
    <text evidence="1">Amino-acid degradation; L-kynurenine degradation; L-alanine and anthranilate from L-kynurenine: step 1/1.</text>
</comment>
<comment type="pathway">
    <text evidence="1">Cofactor biosynthesis; NAD(+) biosynthesis; quinolinate from L-kynurenine: step 2/3.</text>
</comment>
<comment type="subunit">
    <text evidence="1">Homodimer.</text>
</comment>
<comment type="subcellular location">
    <subcellularLocation>
        <location evidence="1">Cytoplasm</location>
    </subcellularLocation>
</comment>
<comment type="similarity">
    <text evidence="1">Belongs to the kynureninase family.</text>
</comment>
<evidence type="ECO:0000255" key="1">
    <source>
        <dbReference type="HAMAP-Rule" id="MF_03017"/>
    </source>
</evidence>
<evidence type="ECO:0000256" key="2">
    <source>
        <dbReference type="SAM" id="MobiDB-lite"/>
    </source>
</evidence>
<keyword id="KW-0963">Cytoplasm</keyword>
<keyword id="KW-0378">Hydrolase</keyword>
<keyword id="KW-0662">Pyridine nucleotide biosynthesis</keyword>
<keyword id="KW-0663">Pyridoxal phosphate</keyword>
<name>KYNU2_PHANO</name>
<reference key="1">
    <citation type="journal article" date="2007" name="Plant Cell">
        <title>Dothideomycete-plant interactions illuminated by genome sequencing and EST analysis of the wheat pathogen Stagonospora nodorum.</title>
        <authorList>
            <person name="Hane J.K."/>
            <person name="Lowe R.G.T."/>
            <person name="Solomon P.S."/>
            <person name="Tan K.-C."/>
            <person name="Schoch C.L."/>
            <person name="Spatafora J.W."/>
            <person name="Crous P.W."/>
            <person name="Kodira C.D."/>
            <person name="Birren B.W."/>
            <person name="Galagan J.E."/>
            <person name="Torriani S.F.F."/>
            <person name="McDonald B.A."/>
            <person name="Oliver R.P."/>
        </authorList>
    </citation>
    <scope>NUCLEOTIDE SEQUENCE [LARGE SCALE GENOMIC DNA]</scope>
    <source>
        <strain>SN15 / ATCC MYA-4574 / FGSC 10173</strain>
    </source>
</reference>
<proteinExistence type="inferred from homology"/>
<dbReference type="EC" id="3.7.1.3" evidence="1"/>
<dbReference type="EMBL" id="CH445328">
    <property type="protein sequence ID" value="EAT89545.1"/>
    <property type="molecule type" value="Genomic_DNA"/>
</dbReference>
<dbReference type="RefSeq" id="XP_001793409.1">
    <property type="nucleotide sequence ID" value="XM_001793357.1"/>
</dbReference>
<dbReference type="SMR" id="Q0UZK0"/>
<dbReference type="FunCoup" id="Q0UZK0">
    <property type="interactions" value="182"/>
</dbReference>
<dbReference type="STRING" id="321614.Q0UZK0"/>
<dbReference type="EnsemblFungi" id="SNOT_02814">
    <property type="protein sequence ID" value="SNOT_02814"/>
    <property type="gene ID" value="SNOG_02814"/>
</dbReference>
<dbReference type="GeneID" id="5970266"/>
<dbReference type="KEGG" id="pno:SNOG_02814"/>
<dbReference type="VEuPathDB" id="FungiDB:JI435_028140"/>
<dbReference type="eggNOG" id="KOG3846">
    <property type="taxonomic scope" value="Eukaryota"/>
</dbReference>
<dbReference type="HOGENOM" id="CLU_003433_4_0_1"/>
<dbReference type="InParanoid" id="Q0UZK0"/>
<dbReference type="OMA" id="SHVAYRS"/>
<dbReference type="OrthoDB" id="5978656at2759"/>
<dbReference type="UniPathway" id="UPA00253">
    <property type="reaction ID" value="UER00329"/>
</dbReference>
<dbReference type="UniPathway" id="UPA00334">
    <property type="reaction ID" value="UER00455"/>
</dbReference>
<dbReference type="Proteomes" id="UP000001055">
    <property type="component" value="Unassembled WGS sequence"/>
</dbReference>
<dbReference type="GO" id="GO:0005737">
    <property type="term" value="C:cytoplasm"/>
    <property type="evidence" value="ECO:0000318"/>
    <property type="project" value="GO_Central"/>
</dbReference>
<dbReference type="GO" id="GO:0030429">
    <property type="term" value="F:kynureninase activity"/>
    <property type="evidence" value="ECO:0000318"/>
    <property type="project" value="GO_Central"/>
</dbReference>
<dbReference type="GO" id="GO:0030170">
    <property type="term" value="F:pyridoxal phosphate binding"/>
    <property type="evidence" value="ECO:0007669"/>
    <property type="project" value="UniProtKB-UniRule"/>
</dbReference>
<dbReference type="GO" id="GO:0034354">
    <property type="term" value="P:'de novo' NAD biosynthetic process from L-tryptophan"/>
    <property type="evidence" value="ECO:0007669"/>
    <property type="project" value="UniProtKB-UniRule"/>
</dbReference>
<dbReference type="GO" id="GO:0043420">
    <property type="term" value="P:anthranilate metabolic process"/>
    <property type="evidence" value="ECO:0000318"/>
    <property type="project" value="GO_Central"/>
</dbReference>
<dbReference type="GO" id="GO:0097053">
    <property type="term" value="P:L-kynurenine catabolic process"/>
    <property type="evidence" value="ECO:0007669"/>
    <property type="project" value="UniProtKB-UniRule"/>
</dbReference>
<dbReference type="GO" id="GO:0019441">
    <property type="term" value="P:L-tryptophan catabolic process to kynurenine"/>
    <property type="evidence" value="ECO:0000318"/>
    <property type="project" value="GO_Central"/>
</dbReference>
<dbReference type="GO" id="GO:0019805">
    <property type="term" value="P:quinolinate biosynthetic process"/>
    <property type="evidence" value="ECO:0007669"/>
    <property type="project" value="UniProtKB-UniRule"/>
</dbReference>
<dbReference type="FunFam" id="3.40.640.10:FF:000031">
    <property type="entry name" value="Kynureninase"/>
    <property type="match status" value="1"/>
</dbReference>
<dbReference type="Gene3D" id="3.90.1150.10">
    <property type="entry name" value="Aspartate Aminotransferase, domain 1"/>
    <property type="match status" value="1"/>
</dbReference>
<dbReference type="Gene3D" id="3.40.640.10">
    <property type="entry name" value="Type I PLP-dependent aspartate aminotransferase-like (Major domain)"/>
    <property type="match status" value="1"/>
</dbReference>
<dbReference type="HAMAP" id="MF_01970">
    <property type="entry name" value="Kynureninase"/>
    <property type="match status" value="1"/>
</dbReference>
<dbReference type="InterPro" id="IPR000192">
    <property type="entry name" value="Aminotrans_V_dom"/>
</dbReference>
<dbReference type="InterPro" id="IPR010111">
    <property type="entry name" value="Kynureninase"/>
</dbReference>
<dbReference type="InterPro" id="IPR015424">
    <property type="entry name" value="PyrdxlP-dep_Trfase"/>
</dbReference>
<dbReference type="InterPro" id="IPR015421">
    <property type="entry name" value="PyrdxlP-dep_Trfase_major"/>
</dbReference>
<dbReference type="InterPro" id="IPR015422">
    <property type="entry name" value="PyrdxlP-dep_Trfase_small"/>
</dbReference>
<dbReference type="NCBIfam" id="TIGR01814">
    <property type="entry name" value="kynureninase"/>
    <property type="match status" value="1"/>
</dbReference>
<dbReference type="PANTHER" id="PTHR14084">
    <property type="entry name" value="KYNURENINASE"/>
    <property type="match status" value="1"/>
</dbReference>
<dbReference type="PANTHER" id="PTHR14084:SF2">
    <property type="entry name" value="KYNURENINASE 2"/>
    <property type="match status" value="1"/>
</dbReference>
<dbReference type="Pfam" id="PF00266">
    <property type="entry name" value="Aminotran_5"/>
    <property type="match status" value="1"/>
</dbReference>
<dbReference type="Pfam" id="PF22580">
    <property type="entry name" value="KYNU_C"/>
    <property type="match status" value="1"/>
</dbReference>
<dbReference type="PIRSF" id="PIRSF038800">
    <property type="entry name" value="KYNU"/>
    <property type="match status" value="1"/>
</dbReference>
<dbReference type="SUPFAM" id="SSF53383">
    <property type="entry name" value="PLP-dependent transferases"/>
    <property type="match status" value="1"/>
</dbReference>
<protein>
    <recommendedName>
        <fullName evidence="1">Kynureninase 2</fullName>
        <ecNumber evidence="1">3.7.1.3</ecNumber>
    </recommendedName>
    <alternativeName>
        <fullName evidence="1">Biosynthesis of nicotinic acid protein 5-2</fullName>
    </alternativeName>
    <alternativeName>
        <fullName evidence="1">L-kynurenine hydrolase 2</fullName>
    </alternativeName>
</protein>
<organism>
    <name type="scientific">Phaeosphaeria nodorum (strain SN15 / ATCC MYA-4574 / FGSC 10173)</name>
    <name type="common">Glume blotch fungus</name>
    <name type="synonym">Parastagonospora nodorum</name>
    <dbReference type="NCBI Taxonomy" id="321614"/>
    <lineage>
        <taxon>Eukaryota</taxon>
        <taxon>Fungi</taxon>
        <taxon>Dikarya</taxon>
        <taxon>Ascomycota</taxon>
        <taxon>Pezizomycotina</taxon>
        <taxon>Dothideomycetes</taxon>
        <taxon>Pleosporomycetidae</taxon>
        <taxon>Pleosporales</taxon>
        <taxon>Pleosporineae</taxon>
        <taxon>Phaeosphaeriaceae</taxon>
        <taxon>Parastagonospora</taxon>
    </lineage>
</organism>
<gene>
    <name evidence="1" type="primary">BNA5-2</name>
    <name type="ORF">SNOG_02814</name>
</gene>